<proteinExistence type="inferred from homology"/>
<comment type="function">
    <text evidence="1">May function as a transcriptional regulator that controls feoABC expression.</text>
</comment>
<comment type="similarity">
    <text evidence="1">Belongs to the FeoC family.</text>
</comment>
<accession>B7L4U0</accession>
<protein>
    <recommendedName>
        <fullName evidence="1">Probable [Fe-S]-dependent transcriptional repressor</fullName>
    </recommendedName>
</protein>
<gene>
    <name evidence="1" type="primary">feoC</name>
    <name type="ordered locus">EC55989_3818</name>
</gene>
<dbReference type="EMBL" id="CU928145">
    <property type="protein sequence ID" value="CAV00179.1"/>
    <property type="molecule type" value="Genomic_DNA"/>
</dbReference>
<dbReference type="RefSeq" id="WP_000157586.1">
    <property type="nucleotide sequence ID" value="NC_011748.1"/>
</dbReference>
<dbReference type="SMR" id="B7L4U0"/>
<dbReference type="GeneID" id="86948257"/>
<dbReference type="KEGG" id="eck:EC55989_3818"/>
<dbReference type="HOGENOM" id="CLU_189182_0_0_6"/>
<dbReference type="Proteomes" id="UP000000746">
    <property type="component" value="Chromosome"/>
</dbReference>
<dbReference type="GO" id="GO:0003677">
    <property type="term" value="F:DNA binding"/>
    <property type="evidence" value="ECO:0007669"/>
    <property type="project" value="UniProtKB-KW"/>
</dbReference>
<dbReference type="GO" id="GO:0005506">
    <property type="term" value="F:iron ion binding"/>
    <property type="evidence" value="ECO:0007669"/>
    <property type="project" value="UniProtKB-UniRule"/>
</dbReference>
<dbReference type="GO" id="GO:0051536">
    <property type="term" value="F:iron-sulfur cluster binding"/>
    <property type="evidence" value="ECO:0007669"/>
    <property type="project" value="UniProtKB-KW"/>
</dbReference>
<dbReference type="Gene3D" id="1.10.10.10">
    <property type="entry name" value="Winged helix-like DNA-binding domain superfamily/Winged helix DNA-binding domain"/>
    <property type="match status" value="1"/>
</dbReference>
<dbReference type="HAMAP" id="MF_01586">
    <property type="entry name" value="FeoC"/>
    <property type="match status" value="1"/>
</dbReference>
<dbReference type="InterPro" id="IPR023732">
    <property type="entry name" value="FeoC"/>
</dbReference>
<dbReference type="InterPro" id="IPR015102">
    <property type="entry name" value="Tscrpt_reg_HTH_FeoC"/>
</dbReference>
<dbReference type="InterPro" id="IPR036388">
    <property type="entry name" value="WH-like_DNA-bd_sf"/>
</dbReference>
<dbReference type="InterPro" id="IPR036390">
    <property type="entry name" value="WH_DNA-bd_sf"/>
</dbReference>
<dbReference type="NCBIfam" id="NF011960">
    <property type="entry name" value="PRK15431.1"/>
    <property type="match status" value="1"/>
</dbReference>
<dbReference type="Pfam" id="PF09012">
    <property type="entry name" value="FeoC"/>
    <property type="match status" value="1"/>
</dbReference>
<dbReference type="SUPFAM" id="SSF46785">
    <property type="entry name" value="Winged helix' DNA-binding domain"/>
    <property type="match status" value="1"/>
</dbReference>
<organism>
    <name type="scientific">Escherichia coli (strain 55989 / EAEC)</name>
    <dbReference type="NCBI Taxonomy" id="585055"/>
    <lineage>
        <taxon>Bacteria</taxon>
        <taxon>Pseudomonadati</taxon>
        <taxon>Pseudomonadota</taxon>
        <taxon>Gammaproteobacteria</taxon>
        <taxon>Enterobacterales</taxon>
        <taxon>Enterobacteriaceae</taxon>
        <taxon>Escherichia</taxon>
    </lineage>
</organism>
<name>FEOC_ECO55</name>
<sequence length="78" mass="8660">MASLIQVRDLLALRGRMEAAQISQTLNTPQPMINAMLQQLESMGKAVRIQEEPDGCLSGSCKSCPEGKACLREWWALR</sequence>
<keyword id="KW-0238">DNA-binding</keyword>
<keyword id="KW-0408">Iron</keyword>
<keyword id="KW-0411">Iron-sulfur</keyword>
<keyword id="KW-0479">Metal-binding</keyword>
<keyword id="KW-1185">Reference proteome</keyword>
<keyword id="KW-0678">Repressor</keyword>
<keyword id="KW-0804">Transcription</keyword>
<keyword id="KW-0805">Transcription regulation</keyword>
<reference key="1">
    <citation type="journal article" date="2009" name="PLoS Genet.">
        <title>Organised genome dynamics in the Escherichia coli species results in highly diverse adaptive paths.</title>
        <authorList>
            <person name="Touchon M."/>
            <person name="Hoede C."/>
            <person name="Tenaillon O."/>
            <person name="Barbe V."/>
            <person name="Baeriswyl S."/>
            <person name="Bidet P."/>
            <person name="Bingen E."/>
            <person name="Bonacorsi S."/>
            <person name="Bouchier C."/>
            <person name="Bouvet O."/>
            <person name="Calteau A."/>
            <person name="Chiapello H."/>
            <person name="Clermont O."/>
            <person name="Cruveiller S."/>
            <person name="Danchin A."/>
            <person name="Diard M."/>
            <person name="Dossat C."/>
            <person name="Karoui M.E."/>
            <person name="Frapy E."/>
            <person name="Garry L."/>
            <person name="Ghigo J.M."/>
            <person name="Gilles A.M."/>
            <person name="Johnson J."/>
            <person name="Le Bouguenec C."/>
            <person name="Lescat M."/>
            <person name="Mangenot S."/>
            <person name="Martinez-Jehanne V."/>
            <person name="Matic I."/>
            <person name="Nassif X."/>
            <person name="Oztas S."/>
            <person name="Petit M.A."/>
            <person name="Pichon C."/>
            <person name="Rouy Z."/>
            <person name="Ruf C.S."/>
            <person name="Schneider D."/>
            <person name="Tourret J."/>
            <person name="Vacherie B."/>
            <person name="Vallenet D."/>
            <person name="Medigue C."/>
            <person name="Rocha E.P.C."/>
            <person name="Denamur E."/>
        </authorList>
    </citation>
    <scope>NUCLEOTIDE SEQUENCE [LARGE SCALE GENOMIC DNA]</scope>
    <source>
        <strain>55989 / EAEC</strain>
    </source>
</reference>
<feature type="chain" id="PRO_1000185675" description="Probable [Fe-S]-dependent transcriptional repressor">
    <location>
        <begin position="1"/>
        <end position="78"/>
    </location>
</feature>
<feature type="binding site" evidence="1">
    <location>
        <position position="56"/>
    </location>
    <ligand>
        <name>iron-sulfur cluster</name>
        <dbReference type="ChEBI" id="CHEBI:30408"/>
    </ligand>
</feature>
<feature type="binding site" evidence="1">
    <location>
        <position position="61"/>
    </location>
    <ligand>
        <name>iron-sulfur cluster</name>
        <dbReference type="ChEBI" id="CHEBI:30408"/>
    </ligand>
</feature>
<feature type="binding site" evidence="1">
    <location>
        <position position="64"/>
    </location>
    <ligand>
        <name>iron-sulfur cluster</name>
        <dbReference type="ChEBI" id="CHEBI:30408"/>
    </ligand>
</feature>
<feature type="binding site" evidence="1">
    <location>
        <position position="70"/>
    </location>
    <ligand>
        <name>iron-sulfur cluster</name>
        <dbReference type="ChEBI" id="CHEBI:30408"/>
    </ligand>
</feature>
<evidence type="ECO:0000255" key="1">
    <source>
        <dbReference type="HAMAP-Rule" id="MF_01586"/>
    </source>
</evidence>